<feature type="chain" id="PRO_1000087004" description="Large ribosomal subunit protein bL21">
    <location>
        <begin position="1"/>
        <end position="102"/>
    </location>
</feature>
<feature type="region of interest" description="Disordered" evidence="2">
    <location>
        <begin position="80"/>
        <end position="102"/>
    </location>
</feature>
<feature type="compositionally biased region" description="Basic residues" evidence="2">
    <location>
        <begin position="80"/>
        <end position="91"/>
    </location>
</feature>
<reference key="1">
    <citation type="submission" date="2007-05" db="EMBL/GenBank/DDBJ databases">
        <title>Complete sequence of chromosome of Staphylococcus aureus subsp. aureus JH9.</title>
        <authorList>
            <consortium name="US DOE Joint Genome Institute"/>
            <person name="Copeland A."/>
            <person name="Lucas S."/>
            <person name="Lapidus A."/>
            <person name="Barry K."/>
            <person name="Detter J.C."/>
            <person name="Glavina del Rio T."/>
            <person name="Hammon N."/>
            <person name="Israni S."/>
            <person name="Pitluck S."/>
            <person name="Chain P."/>
            <person name="Malfatti S."/>
            <person name="Shin M."/>
            <person name="Vergez L."/>
            <person name="Schmutz J."/>
            <person name="Larimer F."/>
            <person name="Land M."/>
            <person name="Hauser L."/>
            <person name="Kyrpides N."/>
            <person name="Kim E."/>
            <person name="Tomasz A."/>
            <person name="Richardson P."/>
        </authorList>
    </citation>
    <scope>NUCLEOTIDE SEQUENCE [LARGE SCALE GENOMIC DNA]</scope>
    <source>
        <strain>JH9</strain>
    </source>
</reference>
<name>RL21_STAA9</name>
<organism>
    <name type="scientific">Staphylococcus aureus (strain JH9)</name>
    <dbReference type="NCBI Taxonomy" id="359786"/>
    <lineage>
        <taxon>Bacteria</taxon>
        <taxon>Bacillati</taxon>
        <taxon>Bacillota</taxon>
        <taxon>Bacilli</taxon>
        <taxon>Bacillales</taxon>
        <taxon>Staphylococcaceae</taxon>
        <taxon>Staphylococcus</taxon>
    </lineage>
</organism>
<comment type="function">
    <text evidence="1">This protein binds to 23S rRNA in the presence of protein L20.</text>
</comment>
<comment type="subunit">
    <text evidence="1">Part of the 50S ribosomal subunit. Contacts protein L20.</text>
</comment>
<comment type="similarity">
    <text evidence="1">Belongs to the bacterial ribosomal protein bL21 family.</text>
</comment>
<sequence length="102" mass="11333">MFAIIETGGKQIKVEEGQEIFVEKLDVNEGDTFTFDKVLFVGGDSVKVGAPTVEGATVTATVNKQGRGKKITVFTYKRRKNSKRKKGHRQPYTKLTIDKINA</sequence>
<protein>
    <recommendedName>
        <fullName evidence="1">Large ribosomal subunit protein bL21</fullName>
    </recommendedName>
    <alternativeName>
        <fullName evidence="3">50S ribosomal protein L21</fullName>
    </alternativeName>
</protein>
<accession>A5ITH1</accession>
<dbReference type="EMBL" id="CP000703">
    <property type="protein sequence ID" value="ABQ49494.1"/>
    <property type="molecule type" value="Genomic_DNA"/>
</dbReference>
<dbReference type="RefSeq" id="WP_000457386.1">
    <property type="nucleotide sequence ID" value="NC_009487.1"/>
</dbReference>
<dbReference type="SMR" id="A5ITH1"/>
<dbReference type="GeneID" id="66839833"/>
<dbReference type="KEGG" id="saj:SaurJH9_1704"/>
<dbReference type="HOGENOM" id="CLU_061463_3_2_9"/>
<dbReference type="GO" id="GO:0005737">
    <property type="term" value="C:cytoplasm"/>
    <property type="evidence" value="ECO:0007669"/>
    <property type="project" value="UniProtKB-ARBA"/>
</dbReference>
<dbReference type="GO" id="GO:1990904">
    <property type="term" value="C:ribonucleoprotein complex"/>
    <property type="evidence" value="ECO:0007669"/>
    <property type="project" value="UniProtKB-KW"/>
</dbReference>
<dbReference type="GO" id="GO:0005840">
    <property type="term" value="C:ribosome"/>
    <property type="evidence" value="ECO:0007669"/>
    <property type="project" value="UniProtKB-KW"/>
</dbReference>
<dbReference type="GO" id="GO:0019843">
    <property type="term" value="F:rRNA binding"/>
    <property type="evidence" value="ECO:0007669"/>
    <property type="project" value="UniProtKB-UniRule"/>
</dbReference>
<dbReference type="GO" id="GO:0003735">
    <property type="term" value="F:structural constituent of ribosome"/>
    <property type="evidence" value="ECO:0007669"/>
    <property type="project" value="InterPro"/>
</dbReference>
<dbReference type="GO" id="GO:0006412">
    <property type="term" value="P:translation"/>
    <property type="evidence" value="ECO:0007669"/>
    <property type="project" value="UniProtKB-UniRule"/>
</dbReference>
<dbReference type="HAMAP" id="MF_01363">
    <property type="entry name" value="Ribosomal_bL21"/>
    <property type="match status" value="1"/>
</dbReference>
<dbReference type="InterPro" id="IPR028909">
    <property type="entry name" value="bL21-like"/>
</dbReference>
<dbReference type="InterPro" id="IPR036164">
    <property type="entry name" value="bL21-like_sf"/>
</dbReference>
<dbReference type="InterPro" id="IPR001787">
    <property type="entry name" value="Ribosomal_bL21"/>
</dbReference>
<dbReference type="NCBIfam" id="TIGR00061">
    <property type="entry name" value="L21"/>
    <property type="match status" value="1"/>
</dbReference>
<dbReference type="PANTHER" id="PTHR21349">
    <property type="entry name" value="50S RIBOSOMAL PROTEIN L21"/>
    <property type="match status" value="1"/>
</dbReference>
<dbReference type="PANTHER" id="PTHR21349:SF0">
    <property type="entry name" value="LARGE RIBOSOMAL SUBUNIT PROTEIN BL21M"/>
    <property type="match status" value="1"/>
</dbReference>
<dbReference type="Pfam" id="PF00829">
    <property type="entry name" value="Ribosomal_L21p"/>
    <property type="match status" value="1"/>
</dbReference>
<dbReference type="SUPFAM" id="SSF141091">
    <property type="entry name" value="L21p-like"/>
    <property type="match status" value="1"/>
</dbReference>
<gene>
    <name evidence="1" type="primary">rplU</name>
    <name type="ordered locus">SaurJH9_1704</name>
</gene>
<evidence type="ECO:0000255" key="1">
    <source>
        <dbReference type="HAMAP-Rule" id="MF_01363"/>
    </source>
</evidence>
<evidence type="ECO:0000256" key="2">
    <source>
        <dbReference type="SAM" id="MobiDB-lite"/>
    </source>
</evidence>
<evidence type="ECO:0000305" key="3"/>
<proteinExistence type="inferred from homology"/>
<keyword id="KW-0687">Ribonucleoprotein</keyword>
<keyword id="KW-0689">Ribosomal protein</keyword>
<keyword id="KW-0694">RNA-binding</keyword>
<keyword id="KW-0699">rRNA-binding</keyword>